<dbReference type="EMBL" id="AM889285">
    <property type="protein sequence ID" value="CAP54638.1"/>
    <property type="molecule type" value="Genomic_DNA"/>
</dbReference>
<dbReference type="EMBL" id="CP001189">
    <property type="protein sequence ID" value="ACI51096.1"/>
    <property type="molecule type" value="Genomic_DNA"/>
</dbReference>
<dbReference type="RefSeq" id="WP_012223289.1">
    <property type="nucleotide sequence ID" value="NC_010125.1"/>
</dbReference>
<dbReference type="SMR" id="A9H9A6"/>
<dbReference type="STRING" id="272568.GDI0695"/>
<dbReference type="KEGG" id="gdi:GDI0695"/>
<dbReference type="KEGG" id="gdj:Gdia_1314"/>
<dbReference type="eggNOG" id="COG0224">
    <property type="taxonomic scope" value="Bacteria"/>
</dbReference>
<dbReference type="HOGENOM" id="CLU_050669_0_1_5"/>
<dbReference type="OrthoDB" id="9812769at2"/>
<dbReference type="Proteomes" id="UP000001176">
    <property type="component" value="Chromosome"/>
</dbReference>
<dbReference type="GO" id="GO:0005886">
    <property type="term" value="C:plasma membrane"/>
    <property type="evidence" value="ECO:0007669"/>
    <property type="project" value="UniProtKB-SubCell"/>
</dbReference>
<dbReference type="GO" id="GO:0045259">
    <property type="term" value="C:proton-transporting ATP synthase complex"/>
    <property type="evidence" value="ECO:0007669"/>
    <property type="project" value="UniProtKB-KW"/>
</dbReference>
<dbReference type="GO" id="GO:0005524">
    <property type="term" value="F:ATP binding"/>
    <property type="evidence" value="ECO:0007669"/>
    <property type="project" value="UniProtKB-UniRule"/>
</dbReference>
<dbReference type="GO" id="GO:0046933">
    <property type="term" value="F:proton-transporting ATP synthase activity, rotational mechanism"/>
    <property type="evidence" value="ECO:0007669"/>
    <property type="project" value="UniProtKB-UniRule"/>
</dbReference>
<dbReference type="GO" id="GO:0042777">
    <property type="term" value="P:proton motive force-driven plasma membrane ATP synthesis"/>
    <property type="evidence" value="ECO:0007669"/>
    <property type="project" value="UniProtKB-UniRule"/>
</dbReference>
<dbReference type="CDD" id="cd12151">
    <property type="entry name" value="F1-ATPase_gamma"/>
    <property type="match status" value="1"/>
</dbReference>
<dbReference type="FunFam" id="1.10.287.80:FF:000001">
    <property type="entry name" value="ATP synthase gamma chain"/>
    <property type="match status" value="1"/>
</dbReference>
<dbReference type="Gene3D" id="3.40.1380.10">
    <property type="match status" value="1"/>
</dbReference>
<dbReference type="Gene3D" id="1.10.287.80">
    <property type="entry name" value="ATP synthase, gamma subunit, helix hairpin domain"/>
    <property type="match status" value="1"/>
</dbReference>
<dbReference type="HAMAP" id="MF_00815">
    <property type="entry name" value="ATP_synth_gamma_bact"/>
    <property type="match status" value="1"/>
</dbReference>
<dbReference type="InterPro" id="IPR035968">
    <property type="entry name" value="ATP_synth_F1_ATPase_gsu"/>
</dbReference>
<dbReference type="InterPro" id="IPR000131">
    <property type="entry name" value="ATP_synth_F1_gsu"/>
</dbReference>
<dbReference type="InterPro" id="IPR023632">
    <property type="entry name" value="ATP_synth_F1_gsu_CS"/>
</dbReference>
<dbReference type="NCBIfam" id="TIGR01146">
    <property type="entry name" value="ATPsyn_F1gamma"/>
    <property type="match status" value="1"/>
</dbReference>
<dbReference type="NCBIfam" id="NF004146">
    <property type="entry name" value="PRK05621.1-4"/>
    <property type="match status" value="1"/>
</dbReference>
<dbReference type="PANTHER" id="PTHR11693">
    <property type="entry name" value="ATP SYNTHASE GAMMA CHAIN"/>
    <property type="match status" value="1"/>
</dbReference>
<dbReference type="PANTHER" id="PTHR11693:SF22">
    <property type="entry name" value="ATP SYNTHASE SUBUNIT GAMMA, MITOCHONDRIAL"/>
    <property type="match status" value="1"/>
</dbReference>
<dbReference type="Pfam" id="PF00231">
    <property type="entry name" value="ATP-synt"/>
    <property type="match status" value="1"/>
</dbReference>
<dbReference type="PIRSF" id="PIRSF039089">
    <property type="entry name" value="ATP_synthase_gamma"/>
    <property type="match status" value="1"/>
</dbReference>
<dbReference type="PRINTS" id="PR00126">
    <property type="entry name" value="ATPASEGAMMA"/>
</dbReference>
<dbReference type="SUPFAM" id="SSF52943">
    <property type="entry name" value="ATP synthase (F1-ATPase), gamma subunit"/>
    <property type="match status" value="1"/>
</dbReference>
<dbReference type="PROSITE" id="PS00153">
    <property type="entry name" value="ATPASE_GAMMA"/>
    <property type="match status" value="1"/>
</dbReference>
<organism>
    <name type="scientific">Gluconacetobacter diazotrophicus (strain ATCC 49037 / DSM 5601 / CCUG 37298 / CIP 103539 / LMG 7603 / PAl5)</name>
    <dbReference type="NCBI Taxonomy" id="272568"/>
    <lineage>
        <taxon>Bacteria</taxon>
        <taxon>Pseudomonadati</taxon>
        <taxon>Pseudomonadota</taxon>
        <taxon>Alphaproteobacteria</taxon>
        <taxon>Acetobacterales</taxon>
        <taxon>Acetobacteraceae</taxon>
        <taxon>Gluconacetobacter</taxon>
    </lineage>
</organism>
<proteinExistence type="inferred from homology"/>
<gene>
    <name evidence="1" type="primary">atpG</name>
    <name type="ordered locus">GDI0695</name>
    <name type="ordered locus">Gdia_1314</name>
</gene>
<keyword id="KW-0066">ATP synthesis</keyword>
<keyword id="KW-0997">Cell inner membrane</keyword>
<keyword id="KW-1003">Cell membrane</keyword>
<keyword id="KW-0139">CF(1)</keyword>
<keyword id="KW-0375">Hydrogen ion transport</keyword>
<keyword id="KW-0406">Ion transport</keyword>
<keyword id="KW-0472">Membrane</keyword>
<keyword id="KW-1185">Reference proteome</keyword>
<keyword id="KW-0813">Transport</keyword>
<sequence length="293" mass="31966">MASLKDLRARIGSVKSTRKITSAMKMVAAAKLRRAQGRAEAARPYAAAMRRMLAELGASVRNEAGLPQLLAGTGKDKVHLLIPMTSDRGLAGAFNANINRTTRDLIRRLQAEGKTIRLLPTGRKGYEFLMREFSDLIVDHVHGSGGKEVPFSAAAELGERLTAMLEKGEFDVCTVVYNRFNNVMSQTPTEMQLIPLAVPANDTVASGERASYEFEPGEEQLLSSLLPRNLQVQLYATMLESAAGEQGARMTAMDNATRNAGKAIDRLTLTYNRTRQTNITNELIEIISGAQAV</sequence>
<accession>A9H9A6</accession>
<accession>B5ZHL6</accession>
<evidence type="ECO:0000255" key="1">
    <source>
        <dbReference type="HAMAP-Rule" id="MF_00815"/>
    </source>
</evidence>
<feature type="chain" id="PRO_1000083790" description="ATP synthase gamma chain">
    <location>
        <begin position="1"/>
        <end position="293"/>
    </location>
</feature>
<reference key="1">
    <citation type="journal article" date="2009" name="BMC Genomics">
        <title>Complete genome sequence of the sugarcane nitrogen-fixing endophyte Gluconacetobacter diazotrophicus Pal5.</title>
        <authorList>
            <person name="Bertalan M."/>
            <person name="Albano R."/>
            <person name="de Padua V."/>
            <person name="Rouws L."/>
            <person name="Rojas C."/>
            <person name="Hemerly A."/>
            <person name="Teixeira K."/>
            <person name="Schwab S."/>
            <person name="Araujo J."/>
            <person name="Oliveira A."/>
            <person name="Franca L."/>
            <person name="Magalhaes V."/>
            <person name="Alqueres S."/>
            <person name="Cardoso A."/>
            <person name="Almeida W."/>
            <person name="Loureiro M.M."/>
            <person name="Nogueira E."/>
            <person name="Cidade D."/>
            <person name="Oliveira D."/>
            <person name="Simao T."/>
            <person name="Macedo J."/>
            <person name="Valadao A."/>
            <person name="Dreschsel M."/>
            <person name="Freitas F."/>
            <person name="Vidal M."/>
            <person name="Guedes H."/>
            <person name="Rodrigues E."/>
            <person name="Meneses C."/>
            <person name="Brioso P."/>
            <person name="Pozzer L."/>
            <person name="Figueiredo D."/>
            <person name="Montano H."/>
            <person name="Junior J."/>
            <person name="de Souza Filho G."/>
            <person name="Martin Quintana Flores V."/>
            <person name="Ferreira B."/>
            <person name="Branco A."/>
            <person name="Gonzalez P."/>
            <person name="Guillobel H."/>
            <person name="Lemos M."/>
            <person name="Seibel L."/>
            <person name="Macedo J."/>
            <person name="Alves-Ferreira M."/>
            <person name="Sachetto-Martins G."/>
            <person name="Coelho A."/>
            <person name="Santos E."/>
            <person name="Amaral G."/>
            <person name="Neves A."/>
            <person name="Pacheco A.B."/>
            <person name="Carvalho D."/>
            <person name="Lery L."/>
            <person name="Bisch P."/>
            <person name="Rossle S.C."/>
            <person name="Urmenyi T."/>
            <person name="Rael Pereira A."/>
            <person name="Silva R."/>
            <person name="Rondinelli E."/>
            <person name="von Kruger W."/>
            <person name="Martins O."/>
            <person name="Baldani J.I."/>
            <person name="Ferreira P.C."/>
        </authorList>
    </citation>
    <scope>NUCLEOTIDE SEQUENCE [LARGE SCALE GENOMIC DNA]</scope>
    <source>
        <strain>ATCC 49037 / DSM 5601 / CCUG 37298 / CIP 103539 / LMG 7603 / PAl5</strain>
    </source>
</reference>
<reference key="2">
    <citation type="journal article" date="2010" name="Stand. Genomic Sci.">
        <title>Two genome sequences of the same bacterial strain, Gluconacetobacter diazotrophicus PAl 5, suggest a new standard in genome sequence submission.</title>
        <authorList>
            <person name="Giongo A."/>
            <person name="Tyler H.L."/>
            <person name="Zipperer U.N."/>
            <person name="Triplett E.W."/>
        </authorList>
    </citation>
    <scope>NUCLEOTIDE SEQUENCE [LARGE SCALE GENOMIC DNA]</scope>
    <source>
        <strain>ATCC 49037 / DSM 5601 / CCUG 37298 / CIP 103539 / LMG 7603 / PAl5</strain>
    </source>
</reference>
<comment type="function">
    <text evidence="1">Produces ATP from ADP in the presence of a proton gradient across the membrane. The gamma chain is believed to be important in regulating ATPase activity and the flow of protons through the CF(0) complex.</text>
</comment>
<comment type="subunit">
    <text evidence="1">F-type ATPases have 2 components, CF(1) - the catalytic core - and CF(0) - the membrane proton channel. CF(1) has five subunits: alpha(3), beta(3), gamma(1), delta(1), epsilon(1). CF(0) has three main subunits: a, b and c.</text>
</comment>
<comment type="subcellular location">
    <subcellularLocation>
        <location evidence="1">Cell inner membrane</location>
        <topology evidence="1">Peripheral membrane protein</topology>
    </subcellularLocation>
</comment>
<comment type="similarity">
    <text evidence="1">Belongs to the ATPase gamma chain family.</text>
</comment>
<protein>
    <recommendedName>
        <fullName evidence="1">ATP synthase gamma chain</fullName>
    </recommendedName>
    <alternativeName>
        <fullName evidence="1">ATP synthase F1 sector gamma subunit</fullName>
    </alternativeName>
    <alternativeName>
        <fullName evidence="1">F-ATPase gamma subunit</fullName>
    </alternativeName>
</protein>
<name>ATPG_GLUDA</name>